<feature type="chain" id="PRO_0000356282" description="Docking protein 3">
    <location>
        <begin position="1"/>
        <end position="426"/>
    </location>
</feature>
<feature type="domain" description="PH">
    <location>
        <begin position="4"/>
        <end position="115"/>
    </location>
</feature>
<feature type="domain" description="IRS-type PTB" evidence="1">
    <location>
        <begin position="145"/>
        <end position="249"/>
    </location>
</feature>
<feature type="region of interest" description="Disordered" evidence="2">
    <location>
        <begin position="243"/>
        <end position="282"/>
    </location>
</feature>
<feature type="region of interest" description="Disordered" evidence="2">
    <location>
        <begin position="357"/>
        <end position="426"/>
    </location>
</feature>
<feature type="compositionally biased region" description="Polar residues" evidence="2">
    <location>
        <begin position="247"/>
        <end position="260"/>
    </location>
</feature>
<feature type="compositionally biased region" description="Basic residues" evidence="2">
    <location>
        <begin position="402"/>
        <end position="411"/>
    </location>
</feature>
<feature type="modified residue" description="Phosphotyrosine" evidence="3">
    <location>
        <position position="331"/>
    </location>
</feature>
<feature type="sequence variant" evidence="3">
    <original>E</original>
    <variation>A</variation>
    <location>
        <position position="122"/>
    </location>
</feature>
<feature type="mutagenesis site" description="Abolishes interaction with INPP5D/SHIP.">
    <original>R</original>
    <variation>A</variation>
    <location>
        <position position="197"/>
    </location>
</feature>
<feature type="mutagenesis site" description="Strongly reduced tyrosine phosphorylation. Abolishes interaction with GRB2 and INPP5D/SHIP." evidence="3">
    <original>Y</original>
    <variation>F</variation>
    <location>
        <position position="331"/>
    </location>
</feature>
<reference key="1">
    <citation type="journal article" date="2007" name="EMBO J.">
        <title>Subcellular localization of Grb2 by the adaptor protein Dok-3 restricts the intensity of Ca2+ signaling in B cells.</title>
        <authorList>
            <person name="Stork B."/>
            <person name="Neumann K."/>
            <person name="Goldbeck I."/>
            <person name="Alers S."/>
            <person name="Kaehne T."/>
            <person name="Naumann M."/>
            <person name="Engelke M."/>
            <person name="Wienands J."/>
        </authorList>
    </citation>
    <scope>NUCLEOTIDE SEQUENCE [MRNA]</scope>
    <scope>FUNCTION</scope>
    <scope>SUBUNIT</scope>
    <scope>SUBCELLULAR LOCATION</scope>
    <scope>PHOSPHORYLATION AT TYR-331</scope>
    <scope>IDENTIFICATION BY MASS SPECTROMETRY</scope>
    <scope>MUTAGENESIS OF TYR-331</scope>
    <scope>VARIANT ALA-122</scope>
    <scope>INTERACTION WITH GRB2 AND INPP5D</scope>
</reference>
<evidence type="ECO:0000255" key="1">
    <source>
        <dbReference type="PROSITE-ProRule" id="PRU00389"/>
    </source>
</evidence>
<evidence type="ECO:0000256" key="2">
    <source>
        <dbReference type="SAM" id="MobiDB-lite"/>
    </source>
</evidence>
<evidence type="ECO:0000269" key="3">
    <source>
    </source>
</evidence>
<evidence type="ECO:0000305" key="4"/>
<gene>
    <name type="primary">DOK3</name>
</gene>
<organism>
    <name type="scientific">Gallus gallus</name>
    <name type="common">Chicken</name>
    <dbReference type="NCBI Taxonomy" id="9031"/>
    <lineage>
        <taxon>Eukaryota</taxon>
        <taxon>Metazoa</taxon>
        <taxon>Chordata</taxon>
        <taxon>Craniata</taxon>
        <taxon>Vertebrata</taxon>
        <taxon>Euteleostomi</taxon>
        <taxon>Archelosauria</taxon>
        <taxon>Archosauria</taxon>
        <taxon>Dinosauria</taxon>
        <taxon>Saurischia</taxon>
        <taxon>Theropoda</taxon>
        <taxon>Coelurosauria</taxon>
        <taxon>Aves</taxon>
        <taxon>Neognathae</taxon>
        <taxon>Galloanserae</taxon>
        <taxon>Galliformes</taxon>
        <taxon>Phasianidae</taxon>
        <taxon>Phasianinae</taxon>
        <taxon>Gallus</taxon>
    </lineage>
</organism>
<name>DOK3_CHICK</name>
<keyword id="KW-1003">Cell membrane</keyword>
<keyword id="KW-0963">Cytoplasm</keyword>
<keyword id="KW-0472">Membrane</keyword>
<keyword id="KW-0597">Phosphoprotein</keyword>
<keyword id="KW-1185">Reference proteome</keyword>
<accession>A3R064</accession>
<proteinExistence type="evidence at protein level"/>
<protein>
    <recommendedName>
        <fullName>Docking protein 3</fullName>
    </recommendedName>
    <alternativeName>
        <fullName>Downstream of tyrosine kinase 3</fullName>
    </alternativeName>
</protein>
<dbReference type="EMBL" id="EF051736">
    <property type="protein sequence ID" value="ABM91434.1"/>
    <property type="molecule type" value="mRNA"/>
</dbReference>
<dbReference type="RefSeq" id="NP_001076832.1">
    <property type="nucleotide sequence ID" value="NM_001083363.1"/>
</dbReference>
<dbReference type="RefSeq" id="XP_046756390.1">
    <property type="nucleotide sequence ID" value="XM_046900434.1"/>
</dbReference>
<dbReference type="RefSeq" id="XP_046783138.1">
    <property type="nucleotide sequence ID" value="XM_046927182.1"/>
</dbReference>
<dbReference type="SMR" id="A3R064"/>
<dbReference type="FunCoup" id="A3R064">
    <property type="interactions" value="14"/>
</dbReference>
<dbReference type="STRING" id="9031.ENSGALP00000041481"/>
<dbReference type="iPTMnet" id="A3R064"/>
<dbReference type="PaxDb" id="9031-ENSGALP00000041481"/>
<dbReference type="Ensembl" id="ENSGALT00010022525.1">
    <property type="protein sequence ID" value="ENSGALP00010012971.1"/>
    <property type="gene ID" value="ENSGALG00010009440.1"/>
</dbReference>
<dbReference type="GeneID" id="429960"/>
<dbReference type="KEGG" id="gga:429960"/>
<dbReference type="VEuPathDB" id="HostDB:geneid_429960"/>
<dbReference type="eggNOG" id="KOG4047">
    <property type="taxonomic scope" value="Eukaryota"/>
</dbReference>
<dbReference type="GeneTree" id="ENSGT00940000161724"/>
<dbReference type="InParanoid" id="A3R064"/>
<dbReference type="OrthoDB" id="6243387at2759"/>
<dbReference type="PhylomeDB" id="A3R064"/>
<dbReference type="PRO" id="PR:A3R064"/>
<dbReference type="Proteomes" id="UP000000539">
    <property type="component" value="Chromosome 13"/>
</dbReference>
<dbReference type="GO" id="GO:0005737">
    <property type="term" value="C:cytoplasm"/>
    <property type="evidence" value="ECO:0000318"/>
    <property type="project" value="GO_Central"/>
</dbReference>
<dbReference type="GO" id="GO:0005886">
    <property type="term" value="C:plasma membrane"/>
    <property type="evidence" value="ECO:0007669"/>
    <property type="project" value="UniProtKB-SubCell"/>
</dbReference>
<dbReference type="GO" id="GO:0007169">
    <property type="term" value="P:cell surface receptor protein tyrosine kinase signaling pathway"/>
    <property type="evidence" value="ECO:0000318"/>
    <property type="project" value="GO_Central"/>
</dbReference>
<dbReference type="GO" id="GO:0007265">
    <property type="term" value="P:Ras protein signal transduction"/>
    <property type="evidence" value="ECO:0000318"/>
    <property type="project" value="GO_Central"/>
</dbReference>
<dbReference type="CDD" id="cd14676">
    <property type="entry name" value="PH_DOK1_2_3"/>
    <property type="match status" value="1"/>
</dbReference>
<dbReference type="CDD" id="cd01203">
    <property type="entry name" value="PTB_DOK1_DOK2_DOK3"/>
    <property type="match status" value="1"/>
</dbReference>
<dbReference type="Gene3D" id="2.30.29.30">
    <property type="entry name" value="Pleckstrin-homology domain (PH domain)/Phosphotyrosine-binding domain (PTB)"/>
    <property type="match status" value="2"/>
</dbReference>
<dbReference type="InterPro" id="IPR050996">
    <property type="entry name" value="Docking_Protein_DOK"/>
</dbReference>
<dbReference type="InterPro" id="IPR037751">
    <property type="entry name" value="Dok1/2/3_PTB"/>
</dbReference>
<dbReference type="InterPro" id="IPR002404">
    <property type="entry name" value="IRS_PTB"/>
</dbReference>
<dbReference type="InterPro" id="IPR011993">
    <property type="entry name" value="PH-like_dom_sf"/>
</dbReference>
<dbReference type="InterPro" id="IPR001849">
    <property type="entry name" value="PH_domain"/>
</dbReference>
<dbReference type="PANTHER" id="PTHR21258:SF42">
    <property type="entry name" value="DOCKING PROTEIN 3"/>
    <property type="match status" value="1"/>
</dbReference>
<dbReference type="PANTHER" id="PTHR21258">
    <property type="entry name" value="DOCKING PROTEIN RELATED"/>
    <property type="match status" value="1"/>
</dbReference>
<dbReference type="Pfam" id="PF02174">
    <property type="entry name" value="IRS"/>
    <property type="match status" value="1"/>
</dbReference>
<dbReference type="SMART" id="SM01244">
    <property type="entry name" value="IRS"/>
    <property type="match status" value="1"/>
</dbReference>
<dbReference type="SMART" id="SM00233">
    <property type="entry name" value="PH"/>
    <property type="match status" value="1"/>
</dbReference>
<dbReference type="SMART" id="SM00310">
    <property type="entry name" value="PTBI"/>
    <property type="match status" value="1"/>
</dbReference>
<dbReference type="SUPFAM" id="SSF50729">
    <property type="entry name" value="PH domain-like"/>
    <property type="match status" value="2"/>
</dbReference>
<dbReference type="PROSITE" id="PS51064">
    <property type="entry name" value="IRS_PTB"/>
    <property type="match status" value="1"/>
</dbReference>
<sequence length="426" mass="47167">MERPVKDGIIYVQHCKFGKRTWRKIRAQLFAASPFGVARMEKFDARDHGTVSDISLQRCARRVIRLSDCVSVGPMGTESCPKATAAFYLTTTEKNYVLAAEQRDEWIEQLCQLAFQGKKEAEQSSSTGLQPIPMEENCLYSSWQDLTEFPVLVLRTEAAARCELHGHYVLAALPHSLTLKDAQSQQPLLTWPYPFLRKFGQDQNIFSFEAGRRSDSGEGTFTFSTPRAAELCRAVAAAIACQQQGQESPQPSAQGLSNQPWGAEAEDPQCSPTLGRAHSGSHSASYPSLNLLRFPPVEPEAPAPIVYASIARGQQPHFRPCPGQPLPEHLYENIFTAQPRPLAEEEAEEEEGRWELGCRQAPEGHSSEAAVPYPARSAPQPHTQRWAPGGSRGGAEEPSRPKPQRTLRAKLVRLLSRDGPGARDWS</sequence>
<comment type="function">
    <text evidence="3">DOK proteins are enzymatically inert adaptor or scaffolding proteins. They provide a docking platform for the assembly of multimolecular signaling complexes. Plays a role as negative regulator of the mobilization of calcium ions and of calcium signaling.</text>
</comment>
<comment type="subunit">
    <text evidence="3">Homooligomer. Interacts with GRB2 and INPP5D/SHIP.</text>
</comment>
<comment type="subcellular location">
    <subcellularLocation>
        <location evidence="3">Cytoplasm</location>
    </subcellularLocation>
    <subcellularLocation>
        <location evidence="3">Cell membrane</location>
        <topology evidence="3">Peripheral membrane protein</topology>
        <orientation evidence="3">Cytoplasmic side</orientation>
    </subcellularLocation>
</comment>
<comment type="domain">
    <text>PTB domain mediates receptor interaction.</text>
</comment>
<comment type="PTM">
    <text evidence="3">Tyrosine-phosphorylated in the presence of GRB2.</text>
</comment>
<comment type="similarity">
    <text evidence="4">Belongs to the DOK family. Type A subfamily.</text>
</comment>